<proteinExistence type="inferred from homology"/>
<feature type="chain" id="PRO_0000213606" description="Putative SNAP25 homologous protein SNAP30">
    <location>
        <begin position="1"/>
        <end position="263"/>
    </location>
</feature>
<feature type="domain" description="t-SNARE coiled-coil homology" evidence="2">
    <location>
        <begin position="198"/>
        <end position="260"/>
    </location>
</feature>
<feature type="region of interest" description="Disordered" evidence="3">
    <location>
        <begin position="1"/>
        <end position="61"/>
    </location>
</feature>
<feature type="region of interest" description="Disordered" evidence="3">
    <location>
        <begin position="132"/>
        <end position="209"/>
    </location>
</feature>
<feature type="compositionally biased region" description="Polar residues" evidence="3">
    <location>
        <begin position="8"/>
        <end position="34"/>
    </location>
</feature>
<feature type="compositionally biased region" description="Polar residues" evidence="3">
    <location>
        <begin position="52"/>
        <end position="61"/>
    </location>
</feature>
<feature type="compositionally biased region" description="Basic and acidic residues" evidence="3">
    <location>
        <begin position="158"/>
        <end position="173"/>
    </location>
</feature>
<feature type="compositionally biased region" description="Polar residues" evidence="3">
    <location>
        <begin position="180"/>
        <end position="194"/>
    </location>
</feature>
<feature type="compositionally biased region" description="Basic and acidic residues" evidence="3">
    <location>
        <begin position="197"/>
        <end position="206"/>
    </location>
</feature>
<organism>
    <name type="scientific">Arabidopsis thaliana</name>
    <name type="common">Mouse-ear cress</name>
    <dbReference type="NCBI Taxonomy" id="3702"/>
    <lineage>
        <taxon>Eukaryota</taxon>
        <taxon>Viridiplantae</taxon>
        <taxon>Streptophyta</taxon>
        <taxon>Embryophyta</taxon>
        <taxon>Tracheophyta</taxon>
        <taxon>Spermatophyta</taxon>
        <taxon>Magnoliopsida</taxon>
        <taxon>eudicotyledons</taxon>
        <taxon>Gunneridae</taxon>
        <taxon>Pentapetalae</taxon>
        <taxon>rosids</taxon>
        <taxon>malvids</taxon>
        <taxon>Brassicales</taxon>
        <taxon>Brassicaceae</taxon>
        <taxon>Camelineae</taxon>
        <taxon>Arabidopsis</taxon>
    </lineage>
</organism>
<protein>
    <recommendedName>
        <fullName>Putative SNAP25 homologous protein SNAP30</fullName>
        <shortName>AtSNAP30</shortName>
    </recommendedName>
    <alternativeName>
        <fullName>Synaptosomal-associated protein SNAP25-like 3</fullName>
    </alternativeName>
</protein>
<sequence length="263" mass="29075">MFGFFKSPGNNKLPNESSNNKGGTITAGRRTSSEPILITPDFDDDDKYKNGFNDSGGLQSQTTEELEKYAVYKAEETTKGVNNCLKIAEDIRSDGARTLEMLHQQGEQINRTHEMAVDMDKDLSRGEKLLNNLGGMFSKPWKPKKTKNITGPMITPDKPSKKSENHKEEREKLGLGAKGRSSSQPALDQPTNALQKVEQEKAKQDDGLSDLSDILGDLKSMAVDMGSEIDKQNKALDHLGDDVDELNSRVQGANQRARHLLSK</sequence>
<accession>Q9LMG8</accession>
<evidence type="ECO:0000250" key="1"/>
<evidence type="ECO:0000255" key="2">
    <source>
        <dbReference type="PROSITE-ProRule" id="PRU00202"/>
    </source>
</evidence>
<evidence type="ECO:0000256" key="3">
    <source>
        <dbReference type="SAM" id="MobiDB-lite"/>
    </source>
</evidence>
<evidence type="ECO:0000305" key="4"/>
<name>SNP30_ARATH</name>
<reference key="1">
    <citation type="journal article" date="2000" name="Nature">
        <title>Sequence and analysis of chromosome 1 of the plant Arabidopsis thaliana.</title>
        <authorList>
            <person name="Theologis A."/>
            <person name="Ecker J.R."/>
            <person name="Palm C.J."/>
            <person name="Federspiel N.A."/>
            <person name="Kaul S."/>
            <person name="White O."/>
            <person name="Alonso J."/>
            <person name="Altafi H."/>
            <person name="Araujo R."/>
            <person name="Bowman C.L."/>
            <person name="Brooks S.Y."/>
            <person name="Buehler E."/>
            <person name="Chan A."/>
            <person name="Chao Q."/>
            <person name="Chen H."/>
            <person name="Cheuk R.F."/>
            <person name="Chin C.W."/>
            <person name="Chung M.K."/>
            <person name="Conn L."/>
            <person name="Conway A.B."/>
            <person name="Conway A.R."/>
            <person name="Creasy T.H."/>
            <person name="Dewar K."/>
            <person name="Dunn P."/>
            <person name="Etgu P."/>
            <person name="Feldblyum T.V."/>
            <person name="Feng J.-D."/>
            <person name="Fong B."/>
            <person name="Fujii C.Y."/>
            <person name="Gill J.E."/>
            <person name="Goldsmith A.D."/>
            <person name="Haas B."/>
            <person name="Hansen N.F."/>
            <person name="Hughes B."/>
            <person name="Huizar L."/>
            <person name="Hunter J.L."/>
            <person name="Jenkins J."/>
            <person name="Johnson-Hopson C."/>
            <person name="Khan S."/>
            <person name="Khaykin E."/>
            <person name="Kim C.J."/>
            <person name="Koo H.L."/>
            <person name="Kremenetskaia I."/>
            <person name="Kurtz D.B."/>
            <person name="Kwan A."/>
            <person name="Lam B."/>
            <person name="Langin-Hooper S."/>
            <person name="Lee A."/>
            <person name="Lee J.M."/>
            <person name="Lenz C.A."/>
            <person name="Li J.H."/>
            <person name="Li Y.-P."/>
            <person name="Lin X."/>
            <person name="Liu S.X."/>
            <person name="Liu Z.A."/>
            <person name="Luros J.S."/>
            <person name="Maiti R."/>
            <person name="Marziali A."/>
            <person name="Militscher J."/>
            <person name="Miranda M."/>
            <person name="Nguyen M."/>
            <person name="Nierman W.C."/>
            <person name="Osborne B.I."/>
            <person name="Pai G."/>
            <person name="Peterson J."/>
            <person name="Pham P.K."/>
            <person name="Rizzo M."/>
            <person name="Rooney T."/>
            <person name="Rowley D."/>
            <person name="Sakano H."/>
            <person name="Salzberg S.L."/>
            <person name="Schwartz J.R."/>
            <person name="Shinn P."/>
            <person name="Southwick A.M."/>
            <person name="Sun H."/>
            <person name="Tallon L.J."/>
            <person name="Tambunga G."/>
            <person name="Toriumi M.J."/>
            <person name="Town C.D."/>
            <person name="Utterback T."/>
            <person name="Van Aken S."/>
            <person name="Vaysberg M."/>
            <person name="Vysotskaia V.S."/>
            <person name="Walker M."/>
            <person name="Wu D."/>
            <person name="Yu G."/>
            <person name="Fraser C.M."/>
            <person name="Venter J.C."/>
            <person name="Davis R.W."/>
        </authorList>
    </citation>
    <scope>NUCLEOTIDE SEQUENCE [LARGE SCALE GENOMIC DNA]</scope>
    <source>
        <strain>cv. Columbia</strain>
    </source>
</reference>
<reference key="2">
    <citation type="journal article" date="2017" name="Plant J.">
        <title>Araport11: a complete reannotation of the Arabidopsis thaliana reference genome.</title>
        <authorList>
            <person name="Cheng C.Y."/>
            <person name="Krishnakumar V."/>
            <person name="Chan A.P."/>
            <person name="Thibaud-Nissen F."/>
            <person name="Schobel S."/>
            <person name="Town C.D."/>
        </authorList>
    </citation>
    <scope>GENOME REANNOTATION</scope>
    <source>
        <strain>cv. Columbia</strain>
    </source>
</reference>
<keyword id="KW-0175">Coiled coil</keyword>
<keyword id="KW-0963">Cytoplasm</keyword>
<keyword id="KW-0472">Membrane</keyword>
<keyword id="KW-0653">Protein transport</keyword>
<keyword id="KW-1185">Reference proteome</keyword>
<keyword id="KW-0813">Transport</keyword>
<comment type="function">
    <text evidence="1">Vesicle trafficking protein that functions in the secretory pathway.</text>
</comment>
<comment type="subcellular location">
    <subcellularLocation>
        <location evidence="1">Membrane</location>
        <topology evidence="1">Peripheral membrane protein</topology>
        <orientation evidence="1">Cytoplasmic side</orientation>
    </subcellularLocation>
    <subcellularLocation>
        <location evidence="1">Cytoplasm</location>
    </subcellularLocation>
</comment>
<comment type="similarity">
    <text evidence="4">Belongs to the SNAP-25 family.</text>
</comment>
<gene>
    <name type="primary">SNAP30</name>
    <name type="ordered locus">At1g13890</name>
    <name type="ORF">F16A14.10</name>
</gene>
<dbReference type="EMBL" id="AC068197">
    <property type="protein sequence ID" value="AAF79396.1"/>
    <property type="molecule type" value="Genomic_DNA"/>
</dbReference>
<dbReference type="EMBL" id="CP002684">
    <property type="protein sequence ID" value="AEE29080.1"/>
    <property type="molecule type" value="Genomic_DNA"/>
</dbReference>
<dbReference type="EMBL" id="CP002684">
    <property type="protein sequence ID" value="ANM58400.1"/>
    <property type="molecule type" value="Genomic_DNA"/>
</dbReference>
<dbReference type="PIR" id="A86272">
    <property type="entry name" value="A86272"/>
</dbReference>
<dbReference type="RefSeq" id="NP_001318998.1">
    <property type="nucleotide sequence ID" value="NM_001332096.1"/>
</dbReference>
<dbReference type="RefSeq" id="NP_172842.1">
    <property type="nucleotide sequence ID" value="NM_101255.2"/>
</dbReference>
<dbReference type="SMR" id="Q9LMG8"/>
<dbReference type="BioGRID" id="23188">
    <property type="interactions" value="1"/>
</dbReference>
<dbReference type="FunCoup" id="Q9LMG8">
    <property type="interactions" value="528"/>
</dbReference>
<dbReference type="IntAct" id="Q9LMG8">
    <property type="interactions" value="1"/>
</dbReference>
<dbReference type="STRING" id="3702.Q9LMG8"/>
<dbReference type="iPTMnet" id="Q9LMG8"/>
<dbReference type="PaxDb" id="3702-AT1G13890.1"/>
<dbReference type="ProteomicsDB" id="232478"/>
<dbReference type="EnsemblPlants" id="AT1G13890.1">
    <property type="protein sequence ID" value="AT1G13890.1"/>
    <property type="gene ID" value="AT1G13890"/>
</dbReference>
<dbReference type="EnsemblPlants" id="AT1G13890.2">
    <property type="protein sequence ID" value="AT1G13890.2"/>
    <property type="gene ID" value="AT1G13890"/>
</dbReference>
<dbReference type="GeneID" id="837948"/>
<dbReference type="Gramene" id="AT1G13890.1">
    <property type="protein sequence ID" value="AT1G13890.1"/>
    <property type="gene ID" value="AT1G13890"/>
</dbReference>
<dbReference type="Gramene" id="AT1G13890.2">
    <property type="protein sequence ID" value="AT1G13890.2"/>
    <property type="gene ID" value="AT1G13890"/>
</dbReference>
<dbReference type="KEGG" id="ath:AT1G13890"/>
<dbReference type="Araport" id="AT1G13890"/>
<dbReference type="TAIR" id="AT1G13890">
    <property type="gene designation" value="SNAP30"/>
</dbReference>
<dbReference type="eggNOG" id="KOG3065">
    <property type="taxonomic scope" value="Eukaryota"/>
</dbReference>
<dbReference type="HOGENOM" id="CLU_061058_0_0_1"/>
<dbReference type="InParanoid" id="Q9LMG8"/>
<dbReference type="OMA" id="GQAWGSN"/>
<dbReference type="OrthoDB" id="19261at2759"/>
<dbReference type="PhylomeDB" id="Q9LMG8"/>
<dbReference type="PRO" id="PR:Q9LMG8"/>
<dbReference type="Proteomes" id="UP000006548">
    <property type="component" value="Chromosome 1"/>
</dbReference>
<dbReference type="ExpressionAtlas" id="Q9LMG8">
    <property type="expression patterns" value="baseline and differential"/>
</dbReference>
<dbReference type="GO" id="GO:0031201">
    <property type="term" value="C:SNARE complex"/>
    <property type="evidence" value="ECO:0007669"/>
    <property type="project" value="InterPro"/>
</dbReference>
<dbReference type="GO" id="GO:0005484">
    <property type="term" value="F:SNAP receptor activity"/>
    <property type="evidence" value="ECO:0000250"/>
    <property type="project" value="TAIR"/>
</dbReference>
<dbReference type="GO" id="GO:0061025">
    <property type="term" value="P:membrane fusion"/>
    <property type="evidence" value="ECO:0000304"/>
    <property type="project" value="TAIR"/>
</dbReference>
<dbReference type="GO" id="GO:0015031">
    <property type="term" value="P:protein transport"/>
    <property type="evidence" value="ECO:0007669"/>
    <property type="project" value="UniProtKB-KW"/>
</dbReference>
<dbReference type="GO" id="GO:0016192">
    <property type="term" value="P:vesicle-mediated transport"/>
    <property type="evidence" value="ECO:0000304"/>
    <property type="project" value="TAIR"/>
</dbReference>
<dbReference type="CDD" id="cd15841">
    <property type="entry name" value="SNARE_Qc"/>
    <property type="match status" value="1"/>
</dbReference>
<dbReference type="CDD" id="cd15861">
    <property type="entry name" value="SNARE_SNAP25N_23N_29N_SEC9N"/>
    <property type="match status" value="1"/>
</dbReference>
<dbReference type="FunFam" id="1.20.5.110:FF:000031">
    <property type="entry name" value="SNAP25 homologous protein SNAP33"/>
    <property type="match status" value="1"/>
</dbReference>
<dbReference type="FunFam" id="1.20.5.110:FF:000040">
    <property type="entry name" value="SNAP25 homologous protein SNAP33"/>
    <property type="match status" value="1"/>
</dbReference>
<dbReference type="Gene3D" id="1.20.5.110">
    <property type="match status" value="2"/>
</dbReference>
<dbReference type="InterPro" id="IPR044766">
    <property type="entry name" value="NPSN/SNAP25-like_N_SNARE"/>
</dbReference>
<dbReference type="InterPro" id="IPR000727">
    <property type="entry name" value="T_SNARE_dom"/>
</dbReference>
<dbReference type="PANTHER" id="PTHR19305:SF40">
    <property type="entry name" value="SNAP25 HOMOLOGOUS PROTEIN SNAP30-RELATED"/>
    <property type="match status" value="1"/>
</dbReference>
<dbReference type="PANTHER" id="PTHR19305">
    <property type="entry name" value="SYNAPTOSOMAL ASSOCIATED PROTEIN"/>
    <property type="match status" value="1"/>
</dbReference>
<dbReference type="SMART" id="SM00397">
    <property type="entry name" value="t_SNARE"/>
    <property type="match status" value="2"/>
</dbReference>
<dbReference type="SUPFAM" id="SSF58038">
    <property type="entry name" value="SNARE fusion complex"/>
    <property type="match status" value="2"/>
</dbReference>
<dbReference type="PROSITE" id="PS50192">
    <property type="entry name" value="T_SNARE"/>
    <property type="match status" value="1"/>
</dbReference>